<accession>P92565</accession>
<accession>Q1ZXV3</accession>
<reference key="1">
    <citation type="journal article" date="1997" name="Nat. Genet.">
        <title>The mitochondrial genome of Arabidopsis thaliana contains 57 genes in 366,924 nucleotides.</title>
        <authorList>
            <person name="Unseld M."/>
            <person name="Marienfeld J.R."/>
            <person name="Brandt P."/>
            <person name="Brennicke A."/>
        </authorList>
    </citation>
    <scope>NUCLEOTIDE SEQUENCE [LARGE SCALE GENOMIC DNA]</scope>
    <source>
        <strain>cv. C24</strain>
    </source>
</reference>
<reference key="2">
    <citation type="journal article" date="2018" name="Plant Cell">
        <title>Correction of persistent errors in Arabidopsis reference mitochondrial genomes.</title>
        <authorList>
            <person name="Sloan D.B."/>
            <person name="Wu Z."/>
            <person name="Sharbrough J."/>
        </authorList>
    </citation>
    <scope>NUCLEOTIDE SEQUENCE [LARGE SCALE GENOMIC DNA]</scope>
    <source>
        <strain>cv. Columbia</strain>
    </source>
</reference>
<geneLocation type="mitochondrion"/>
<comment type="subcellular location">
    <subcellularLocation>
        <location evidence="2">Mitochondrion membrane</location>
        <topology evidence="2">Single-pass membrane protein</topology>
    </subcellularLocation>
</comment>
<organism>
    <name type="scientific">Arabidopsis thaliana</name>
    <name type="common">Mouse-ear cress</name>
    <dbReference type="NCBI Taxonomy" id="3702"/>
    <lineage>
        <taxon>Eukaryota</taxon>
        <taxon>Viridiplantae</taxon>
        <taxon>Streptophyta</taxon>
        <taxon>Embryophyta</taxon>
        <taxon>Tracheophyta</taxon>
        <taxon>Spermatophyta</taxon>
        <taxon>Magnoliopsida</taxon>
        <taxon>eudicotyledons</taxon>
        <taxon>Gunneridae</taxon>
        <taxon>Pentapetalae</taxon>
        <taxon>rosids</taxon>
        <taxon>malvids</taxon>
        <taxon>Brassicales</taxon>
        <taxon>Brassicaceae</taxon>
        <taxon>Camelineae</taxon>
        <taxon>Arabidopsis</taxon>
    </lineage>
</organism>
<gene>
    <name type="ordered locus">AtMg01370</name>
</gene>
<sequence>MKISYFIRRGKKTSRRSHFIKMKKNIITTQLFKPDNAFIFFSGIHGSVNRATYKYKISKTFGRFLAHISCLICILSKRIFVLSFSVIGSFCHPSIVHFDCLLFFLDTTPCL</sequence>
<feature type="chain" id="PRO_0000196829" description="Uncharacterized mitochondrial protein AtMg01370">
    <location>
        <begin position="1"/>
        <end position="111"/>
    </location>
</feature>
<feature type="transmembrane region" description="Helical" evidence="1">
    <location>
        <begin position="60"/>
        <end position="80"/>
    </location>
</feature>
<dbReference type="EMBL" id="Y08501">
    <property type="protein sequence ID" value="CAA69786.1"/>
    <property type="molecule type" value="Genomic_DNA"/>
</dbReference>
<dbReference type="EMBL" id="BK010421">
    <property type="status" value="NOT_ANNOTATED_CDS"/>
    <property type="molecule type" value="Genomic_DNA"/>
</dbReference>
<dbReference type="RefSeq" id="NP_085588.1">
    <property type="nucleotide sequence ID" value="NC_001284.2"/>
</dbReference>
<dbReference type="STRING" id="3702.P92565"/>
<dbReference type="PaxDb" id="3702-ATMG01370.1"/>
<dbReference type="EnsemblPlants" id="ATMG01370.1">
    <property type="protein sequence ID" value="ATMG01370.1"/>
    <property type="gene ID" value="ATMG01370"/>
</dbReference>
<dbReference type="Gramene" id="ATMG01370.1">
    <property type="protein sequence ID" value="ATMG01370.1"/>
    <property type="gene ID" value="ATMG01370"/>
</dbReference>
<dbReference type="Araport" id="ATMG01370"/>
<dbReference type="TAIR" id="ATMG01370">
    <property type="gene designation" value="ORF111D"/>
</dbReference>
<dbReference type="HOGENOM" id="CLU_2161895_0_0_1"/>
<dbReference type="InParanoid" id="P92565"/>
<dbReference type="PRO" id="PR:P92565"/>
<dbReference type="Proteomes" id="UP000006548">
    <property type="component" value="Mitochondrion MT"/>
</dbReference>
<dbReference type="GO" id="GO:0031966">
    <property type="term" value="C:mitochondrial membrane"/>
    <property type="evidence" value="ECO:0007669"/>
    <property type="project" value="UniProtKB-SubCell"/>
</dbReference>
<proteinExistence type="predicted"/>
<evidence type="ECO:0000255" key="1"/>
<evidence type="ECO:0000305" key="2"/>
<protein>
    <recommendedName>
        <fullName>Uncharacterized mitochondrial protein AtMg01370</fullName>
    </recommendedName>
    <alternativeName>
        <fullName>ORF111d</fullName>
    </alternativeName>
</protein>
<keyword id="KW-0472">Membrane</keyword>
<keyword id="KW-0496">Mitochondrion</keyword>
<keyword id="KW-1185">Reference proteome</keyword>
<keyword id="KW-0812">Transmembrane</keyword>
<keyword id="KW-1133">Transmembrane helix</keyword>
<name>M1370_ARATH</name>